<gene>
    <name evidence="3" type="primary">Prr23a3</name>
</gene>
<accession>Q9CWP9</accession>
<reference key="1">
    <citation type="journal article" date="2005" name="Science">
        <title>The transcriptional landscape of the mammalian genome.</title>
        <authorList>
            <person name="Carninci P."/>
            <person name="Kasukawa T."/>
            <person name="Katayama S."/>
            <person name="Gough J."/>
            <person name="Frith M.C."/>
            <person name="Maeda N."/>
            <person name="Oyama R."/>
            <person name="Ravasi T."/>
            <person name="Lenhard B."/>
            <person name="Wells C."/>
            <person name="Kodzius R."/>
            <person name="Shimokawa K."/>
            <person name="Bajic V.B."/>
            <person name="Brenner S.E."/>
            <person name="Batalov S."/>
            <person name="Forrest A.R."/>
            <person name="Zavolan M."/>
            <person name="Davis M.J."/>
            <person name="Wilming L.G."/>
            <person name="Aidinis V."/>
            <person name="Allen J.E."/>
            <person name="Ambesi-Impiombato A."/>
            <person name="Apweiler R."/>
            <person name="Aturaliya R.N."/>
            <person name="Bailey T.L."/>
            <person name="Bansal M."/>
            <person name="Baxter L."/>
            <person name="Beisel K.W."/>
            <person name="Bersano T."/>
            <person name="Bono H."/>
            <person name="Chalk A.M."/>
            <person name="Chiu K.P."/>
            <person name="Choudhary V."/>
            <person name="Christoffels A."/>
            <person name="Clutterbuck D.R."/>
            <person name="Crowe M.L."/>
            <person name="Dalla E."/>
            <person name="Dalrymple B.P."/>
            <person name="de Bono B."/>
            <person name="Della Gatta G."/>
            <person name="di Bernardo D."/>
            <person name="Down T."/>
            <person name="Engstrom P."/>
            <person name="Fagiolini M."/>
            <person name="Faulkner G."/>
            <person name="Fletcher C.F."/>
            <person name="Fukushima T."/>
            <person name="Furuno M."/>
            <person name="Futaki S."/>
            <person name="Gariboldi M."/>
            <person name="Georgii-Hemming P."/>
            <person name="Gingeras T.R."/>
            <person name="Gojobori T."/>
            <person name="Green R.E."/>
            <person name="Gustincich S."/>
            <person name="Harbers M."/>
            <person name="Hayashi Y."/>
            <person name="Hensch T.K."/>
            <person name="Hirokawa N."/>
            <person name="Hill D."/>
            <person name="Huminiecki L."/>
            <person name="Iacono M."/>
            <person name="Ikeo K."/>
            <person name="Iwama A."/>
            <person name="Ishikawa T."/>
            <person name="Jakt M."/>
            <person name="Kanapin A."/>
            <person name="Katoh M."/>
            <person name="Kawasawa Y."/>
            <person name="Kelso J."/>
            <person name="Kitamura H."/>
            <person name="Kitano H."/>
            <person name="Kollias G."/>
            <person name="Krishnan S.P."/>
            <person name="Kruger A."/>
            <person name="Kummerfeld S.K."/>
            <person name="Kurochkin I.V."/>
            <person name="Lareau L.F."/>
            <person name="Lazarevic D."/>
            <person name="Lipovich L."/>
            <person name="Liu J."/>
            <person name="Liuni S."/>
            <person name="McWilliam S."/>
            <person name="Madan Babu M."/>
            <person name="Madera M."/>
            <person name="Marchionni L."/>
            <person name="Matsuda H."/>
            <person name="Matsuzawa S."/>
            <person name="Miki H."/>
            <person name="Mignone F."/>
            <person name="Miyake S."/>
            <person name="Morris K."/>
            <person name="Mottagui-Tabar S."/>
            <person name="Mulder N."/>
            <person name="Nakano N."/>
            <person name="Nakauchi H."/>
            <person name="Ng P."/>
            <person name="Nilsson R."/>
            <person name="Nishiguchi S."/>
            <person name="Nishikawa S."/>
            <person name="Nori F."/>
            <person name="Ohara O."/>
            <person name="Okazaki Y."/>
            <person name="Orlando V."/>
            <person name="Pang K.C."/>
            <person name="Pavan W.J."/>
            <person name="Pavesi G."/>
            <person name="Pesole G."/>
            <person name="Petrovsky N."/>
            <person name="Piazza S."/>
            <person name="Reed J."/>
            <person name="Reid J.F."/>
            <person name="Ring B.Z."/>
            <person name="Ringwald M."/>
            <person name="Rost B."/>
            <person name="Ruan Y."/>
            <person name="Salzberg S.L."/>
            <person name="Sandelin A."/>
            <person name="Schneider C."/>
            <person name="Schoenbach C."/>
            <person name="Sekiguchi K."/>
            <person name="Semple C.A."/>
            <person name="Seno S."/>
            <person name="Sessa L."/>
            <person name="Sheng Y."/>
            <person name="Shibata Y."/>
            <person name="Shimada H."/>
            <person name="Shimada K."/>
            <person name="Silva D."/>
            <person name="Sinclair B."/>
            <person name="Sperling S."/>
            <person name="Stupka E."/>
            <person name="Sugiura K."/>
            <person name="Sultana R."/>
            <person name="Takenaka Y."/>
            <person name="Taki K."/>
            <person name="Tammoja K."/>
            <person name="Tan S.L."/>
            <person name="Tang S."/>
            <person name="Taylor M.S."/>
            <person name="Tegner J."/>
            <person name="Teichmann S.A."/>
            <person name="Ueda H.R."/>
            <person name="van Nimwegen E."/>
            <person name="Verardo R."/>
            <person name="Wei C.L."/>
            <person name="Yagi K."/>
            <person name="Yamanishi H."/>
            <person name="Zabarovsky E."/>
            <person name="Zhu S."/>
            <person name="Zimmer A."/>
            <person name="Hide W."/>
            <person name="Bult C."/>
            <person name="Grimmond S.M."/>
            <person name="Teasdale R.D."/>
            <person name="Liu E.T."/>
            <person name="Brusic V."/>
            <person name="Quackenbush J."/>
            <person name="Wahlestedt C."/>
            <person name="Mattick J.S."/>
            <person name="Hume D.A."/>
            <person name="Kai C."/>
            <person name="Sasaki D."/>
            <person name="Tomaru Y."/>
            <person name="Fukuda S."/>
            <person name="Kanamori-Katayama M."/>
            <person name="Suzuki M."/>
            <person name="Aoki J."/>
            <person name="Arakawa T."/>
            <person name="Iida J."/>
            <person name="Imamura K."/>
            <person name="Itoh M."/>
            <person name="Kato T."/>
            <person name="Kawaji H."/>
            <person name="Kawagashira N."/>
            <person name="Kawashima T."/>
            <person name="Kojima M."/>
            <person name="Kondo S."/>
            <person name="Konno H."/>
            <person name="Nakano K."/>
            <person name="Ninomiya N."/>
            <person name="Nishio T."/>
            <person name="Okada M."/>
            <person name="Plessy C."/>
            <person name="Shibata K."/>
            <person name="Shiraki T."/>
            <person name="Suzuki S."/>
            <person name="Tagami M."/>
            <person name="Waki K."/>
            <person name="Watahiki A."/>
            <person name="Okamura-Oho Y."/>
            <person name="Suzuki H."/>
            <person name="Kawai J."/>
            <person name="Hayashizaki Y."/>
        </authorList>
    </citation>
    <scope>NUCLEOTIDE SEQUENCE [LARGE SCALE MRNA]</scope>
    <source>
        <strain>C57BL/6J</strain>
    </source>
</reference>
<reference key="2">
    <citation type="journal article" date="2004" name="Genome Res.">
        <title>The status, quality, and expansion of the NIH full-length cDNA project: the Mammalian Gene Collection (MGC).</title>
        <authorList>
            <consortium name="The MGC Project Team"/>
        </authorList>
    </citation>
    <scope>NUCLEOTIDE SEQUENCE [LARGE SCALE MRNA]</scope>
</reference>
<proteinExistence type="evidence at transcript level"/>
<evidence type="ECO:0000256" key="1">
    <source>
        <dbReference type="SAM" id="MobiDB-lite"/>
    </source>
</evidence>
<evidence type="ECO:0000305" key="2"/>
<evidence type="ECO:0000312" key="3">
    <source>
        <dbReference type="MGI" id="MGI:1919229"/>
    </source>
</evidence>
<comment type="similarity">
    <text evidence="2">Belongs to the PRR23 family.</text>
</comment>
<name>P23A3_MOUSE</name>
<keyword id="KW-1185">Reference proteome</keyword>
<sequence length="254" mass="27565">MLRTRPRSPSADPAPCWSPQTPAPSPAKRRRLHQEPACPEPLAQPELEAPAEPTTSVVFLAAGSALQLPLDGVDLLLEPEPTSVLQVSLQGHTILLVPEGLQDSTHFGQPGFVAISPQGAAAQDGPQDHLVGLQEETFCEYFYQEDVCDEDADLEFLEHWASPPDDQANGNFSSIPGVPSPLSQDQVPGPSTGAEQYSPRFIWELDINMLGPFPGSPLQPLPPSPSRNPQEQLPPCPPCSPRAPRRARKRLVYE</sequence>
<organism>
    <name type="scientific">Mus musculus</name>
    <name type="common">Mouse</name>
    <dbReference type="NCBI Taxonomy" id="10090"/>
    <lineage>
        <taxon>Eukaryota</taxon>
        <taxon>Metazoa</taxon>
        <taxon>Chordata</taxon>
        <taxon>Craniata</taxon>
        <taxon>Vertebrata</taxon>
        <taxon>Euteleostomi</taxon>
        <taxon>Mammalia</taxon>
        <taxon>Eutheria</taxon>
        <taxon>Euarchontoglires</taxon>
        <taxon>Glires</taxon>
        <taxon>Rodentia</taxon>
        <taxon>Myomorpha</taxon>
        <taxon>Muroidea</taxon>
        <taxon>Muridae</taxon>
        <taxon>Murinae</taxon>
        <taxon>Mus</taxon>
        <taxon>Mus</taxon>
    </lineage>
</organism>
<dbReference type="EMBL" id="AK010476">
    <property type="protein sequence ID" value="BAB26969.1"/>
    <property type="molecule type" value="mRNA"/>
</dbReference>
<dbReference type="EMBL" id="BC128017">
    <property type="protein sequence ID" value="AAI28018.1"/>
    <property type="molecule type" value="mRNA"/>
</dbReference>
<dbReference type="CCDS" id="CCDS52896.1"/>
<dbReference type="RefSeq" id="NP_082309.1">
    <property type="nucleotide sequence ID" value="NM_028033.1"/>
</dbReference>
<dbReference type="FunCoup" id="Q9CWP9">
    <property type="interactions" value="1"/>
</dbReference>
<dbReference type="PhosphoSitePlus" id="Q9CWP9"/>
<dbReference type="PaxDb" id="10090-ENSMUSP00000130716"/>
<dbReference type="Ensembl" id="ENSMUST00000167951.3">
    <property type="protein sequence ID" value="ENSMUSP00000130716.2"/>
    <property type="gene ID" value="ENSMUSG00000090470.3"/>
</dbReference>
<dbReference type="GeneID" id="71979"/>
<dbReference type="KEGG" id="mmu:71979"/>
<dbReference type="UCSC" id="uc012gyw.1">
    <property type="organism name" value="mouse"/>
</dbReference>
<dbReference type="AGR" id="MGI:1919229"/>
<dbReference type="CTD" id="71979"/>
<dbReference type="MGI" id="MGI:1919229">
    <property type="gene designation" value="Prr23a3"/>
</dbReference>
<dbReference type="VEuPathDB" id="HostDB:ENSMUSG00000090470"/>
<dbReference type="eggNOG" id="ENOG502RU0G">
    <property type="taxonomic scope" value="Eukaryota"/>
</dbReference>
<dbReference type="GeneTree" id="ENSGT00390000007772"/>
<dbReference type="HOGENOM" id="CLU_090685_0_0_1"/>
<dbReference type="InParanoid" id="Q9CWP9"/>
<dbReference type="OMA" id="SMFIPYR"/>
<dbReference type="OrthoDB" id="9717112at2759"/>
<dbReference type="PhylomeDB" id="Q9CWP9"/>
<dbReference type="TreeFam" id="TF338612"/>
<dbReference type="BioGRID-ORCS" id="71979">
    <property type="hits" value="0 hits in 44 CRISPR screens"/>
</dbReference>
<dbReference type="PRO" id="PR:Q9CWP9"/>
<dbReference type="Proteomes" id="UP000000589">
    <property type="component" value="Chromosome 9"/>
</dbReference>
<dbReference type="RNAct" id="Q9CWP9">
    <property type="molecule type" value="protein"/>
</dbReference>
<dbReference type="Bgee" id="ENSMUSG00000090470">
    <property type="expression patterns" value="Expressed in secondary oocyte and 13 other cell types or tissues"/>
</dbReference>
<dbReference type="InterPro" id="IPR018903">
    <property type="entry name" value="PRR23"/>
</dbReference>
<dbReference type="PANTHER" id="PTHR31813:SF4">
    <property type="entry name" value="PROLINE-RICH PROTEIN 23A"/>
    <property type="match status" value="1"/>
</dbReference>
<dbReference type="PANTHER" id="PTHR31813">
    <property type="entry name" value="PROLINE-RICH PROTEIN 23B"/>
    <property type="match status" value="1"/>
</dbReference>
<dbReference type="Pfam" id="PF10630">
    <property type="entry name" value="DUF2476"/>
    <property type="match status" value="1"/>
</dbReference>
<feature type="chain" id="PRO_0000332253" description="Proline-rich protein 23A3">
    <location>
        <begin position="1"/>
        <end position="254"/>
    </location>
</feature>
<feature type="region of interest" description="Disordered" evidence="1">
    <location>
        <begin position="1"/>
        <end position="50"/>
    </location>
</feature>
<feature type="region of interest" description="Disordered" evidence="1">
    <location>
        <begin position="161"/>
        <end position="196"/>
    </location>
</feature>
<feature type="region of interest" description="Disordered" evidence="1">
    <location>
        <begin position="212"/>
        <end position="254"/>
    </location>
</feature>
<feature type="compositionally biased region" description="Low complexity" evidence="1">
    <location>
        <begin position="35"/>
        <end position="50"/>
    </location>
</feature>
<feature type="compositionally biased region" description="Pro residues" evidence="1">
    <location>
        <begin position="214"/>
        <end position="241"/>
    </location>
</feature>
<feature type="compositionally biased region" description="Basic residues" evidence="1">
    <location>
        <begin position="243"/>
        <end position="254"/>
    </location>
</feature>
<protein>
    <recommendedName>
        <fullName evidence="3">Proline-rich protein 23A3</fullName>
    </recommendedName>
</protein>